<reference key="1">
    <citation type="journal article" date="2005" name="J. Bacteriol.">
        <title>Whole-genome sequencing of Staphylococcus haemolyticus uncovers the extreme plasticity of its genome and the evolution of human-colonizing staphylococcal species.</title>
        <authorList>
            <person name="Takeuchi F."/>
            <person name="Watanabe S."/>
            <person name="Baba T."/>
            <person name="Yuzawa H."/>
            <person name="Ito T."/>
            <person name="Morimoto Y."/>
            <person name="Kuroda M."/>
            <person name="Cui L."/>
            <person name="Takahashi M."/>
            <person name="Ankai A."/>
            <person name="Baba S."/>
            <person name="Fukui S."/>
            <person name="Lee J.C."/>
            <person name="Hiramatsu K."/>
        </authorList>
    </citation>
    <scope>NUCLEOTIDE SEQUENCE [LARGE SCALE GENOMIC DNA]</scope>
    <source>
        <strain>JCSC1435</strain>
    </source>
</reference>
<name>PURK_STAHJ</name>
<sequence length="374" mass="42583">MNFNKLKFGDTIGIIGGGQLGKMMAQSAQKMGFKVICLDPNPDSPCKSVAHEFITAAYDDEEALHELGEKSDVITYEFENISAEQLIRLTQKFNIPQGYQAIQLLQDRLTEKQTLQKAGSKIVPFLPIKEEKDLNVVINQLGYPFIVKTRFGGYDGKGQVLVKNEESIQEAKDLISQQECVAEQFLDIALEVSLTVTIGNQKQITYFPLQENEHRNQILFKTIVPARSDKEQEARDEVNKIINEVHFVGTFTVEFFIDKSNNLYVNEIAPRPHNSGHYSIEACDYSQFDTHILAVTGQNLPKEIEILKPAVMMNLLGRDLDLLEDKFANHPEWHVHIYGKPERKPNRKMGHMTILTNNVDETEKAMLKQFEGRE</sequence>
<keyword id="KW-0067">ATP-binding</keyword>
<keyword id="KW-0436">Ligase</keyword>
<keyword id="KW-0547">Nucleotide-binding</keyword>
<keyword id="KW-0658">Purine biosynthesis</keyword>
<proteinExistence type="inferred from homology"/>
<evidence type="ECO:0000255" key="1">
    <source>
        <dbReference type="HAMAP-Rule" id="MF_01928"/>
    </source>
</evidence>
<evidence type="ECO:0000305" key="2"/>
<organism>
    <name type="scientific">Staphylococcus haemolyticus (strain JCSC1435)</name>
    <dbReference type="NCBI Taxonomy" id="279808"/>
    <lineage>
        <taxon>Bacteria</taxon>
        <taxon>Bacillati</taxon>
        <taxon>Bacillota</taxon>
        <taxon>Bacilli</taxon>
        <taxon>Bacillales</taxon>
        <taxon>Staphylococcaceae</taxon>
        <taxon>Staphylococcus</taxon>
    </lineage>
</organism>
<dbReference type="EC" id="6.3.4.18" evidence="1"/>
<dbReference type="EMBL" id="AP006716">
    <property type="protein sequence ID" value="BAE05201.1"/>
    <property type="status" value="ALT_INIT"/>
    <property type="molecule type" value="Genomic_DNA"/>
</dbReference>
<dbReference type="RefSeq" id="WP_029376687.1">
    <property type="nucleotide sequence ID" value="NC_007168.1"/>
</dbReference>
<dbReference type="SMR" id="Q4L574"/>
<dbReference type="GeneID" id="93781258"/>
<dbReference type="KEGG" id="sha:SH1892"/>
<dbReference type="eggNOG" id="COG0026">
    <property type="taxonomic scope" value="Bacteria"/>
</dbReference>
<dbReference type="HOGENOM" id="CLU_011534_0_1_9"/>
<dbReference type="OrthoDB" id="9804625at2"/>
<dbReference type="UniPathway" id="UPA00074">
    <property type="reaction ID" value="UER00942"/>
</dbReference>
<dbReference type="Proteomes" id="UP000000543">
    <property type="component" value="Chromosome"/>
</dbReference>
<dbReference type="GO" id="GO:0005829">
    <property type="term" value="C:cytosol"/>
    <property type="evidence" value="ECO:0007669"/>
    <property type="project" value="TreeGrafter"/>
</dbReference>
<dbReference type="GO" id="GO:0034028">
    <property type="term" value="F:5-(carboxyamino)imidazole ribonucleotide synthase activity"/>
    <property type="evidence" value="ECO:0007669"/>
    <property type="project" value="UniProtKB-UniRule"/>
</dbReference>
<dbReference type="GO" id="GO:0005524">
    <property type="term" value="F:ATP binding"/>
    <property type="evidence" value="ECO:0007669"/>
    <property type="project" value="UniProtKB-KW"/>
</dbReference>
<dbReference type="GO" id="GO:0046872">
    <property type="term" value="F:metal ion binding"/>
    <property type="evidence" value="ECO:0007669"/>
    <property type="project" value="InterPro"/>
</dbReference>
<dbReference type="GO" id="GO:0004638">
    <property type="term" value="F:phosphoribosylaminoimidazole carboxylase activity"/>
    <property type="evidence" value="ECO:0007669"/>
    <property type="project" value="InterPro"/>
</dbReference>
<dbReference type="GO" id="GO:0006189">
    <property type="term" value="P:'de novo' IMP biosynthetic process"/>
    <property type="evidence" value="ECO:0007669"/>
    <property type="project" value="UniProtKB-UniRule"/>
</dbReference>
<dbReference type="FunFam" id="3.40.50.20:FF:000016">
    <property type="entry name" value="N5-carboxyaminoimidazole ribonucleotide synthase"/>
    <property type="match status" value="1"/>
</dbReference>
<dbReference type="Gene3D" id="3.40.50.20">
    <property type="match status" value="1"/>
</dbReference>
<dbReference type="Gene3D" id="3.30.1490.20">
    <property type="entry name" value="ATP-grasp fold, A domain"/>
    <property type="match status" value="1"/>
</dbReference>
<dbReference type="Gene3D" id="3.30.470.20">
    <property type="entry name" value="ATP-grasp fold, B domain"/>
    <property type="match status" value="1"/>
</dbReference>
<dbReference type="HAMAP" id="MF_01928">
    <property type="entry name" value="PurK"/>
    <property type="match status" value="1"/>
</dbReference>
<dbReference type="InterPro" id="IPR011761">
    <property type="entry name" value="ATP-grasp"/>
</dbReference>
<dbReference type="InterPro" id="IPR003135">
    <property type="entry name" value="ATP-grasp_carboxylate-amine"/>
</dbReference>
<dbReference type="InterPro" id="IPR013815">
    <property type="entry name" value="ATP_grasp_subdomain_1"/>
</dbReference>
<dbReference type="InterPro" id="IPR016185">
    <property type="entry name" value="PreATP-grasp_dom_sf"/>
</dbReference>
<dbReference type="InterPro" id="IPR005875">
    <property type="entry name" value="PurK"/>
</dbReference>
<dbReference type="InterPro" id="IPR040686">
    <property type="entry name" value="PurK_C"/>
</dbReference>
<dbReference type="InterPro" id="IPR054350">
    <property type="entry name" value="PurT/PurK_preATP-grasp"/>
</dbReference>
<dbReference type="InterPro" id="IPR011054">
    <property type="entry name" value="Rudment_hybrid_motif"/>
</dbReference>
<dbReference type="NCBIfam" id="NF004675">
    <property type="entry name" value="PRK06019.1-1"/>
    <property type="match status" value="1"/>
</dbReference>
<dbReference type="NCBIfam" id="NF004679">
    <property type="entry name" value="PRK06019.1-5"/>
    <property type="match status" value="1"/>
</dbReference>
<dbReference type="NCBIfam" id="TIGR01161">
    <property type="entry name" value="purK"/>
    <property type="match status" value="1"/>
</dbReference>
<dbReference type="PANTHER" id="PTHR11609:SF5">
    <property type="entry name" value="PHOSPHORIBOSYLAMINOIMIDAZOLE CARBOXYLASE"/>
    <property type="match status" value="1"/>
</dbReference>
<dbReference type="PANTHER" id="PTHR11609">
    <property type="entry name" value="PURINE BIOSYNTHESIS PROTEIN 6/7, PUR6/7"/>
    <property type="match status" value="1"/>
</dbReference>
<dbReference type="Pfam" id="PF02222">
    <property type="entry name" value="ATP-grasp"/>
    <property type="match status" value="1"/>
</dbReference>
<dbReference type="Pfam" id="PF17769">
    <property type="entry name" value="PurK_C"/>
    <property type="match status" value="1"/>
</dbReference>
<dbReference type="Pfam" id="PF22660">
    <property type="entry name" value="RS_preATP-grasp-like"/>
    <property type="match status" value="1"/>
</dbReference>
<dbReference type="SUPFAM" id="SSF56059">
    <property type="entry name" value="Glutathione synthetase ATP-binding domain-like"/>
    <property type="match status" value="1"/>
</dbReference>
<dbReference type="SUPFAM" id="SSF52440">
    <property type="entry name" value="PreATP-grasp domain"/>
    <property type="match status" value="1"/>
</dbReference>
<dbReference type="SUPFAM" id="SSF51246">
    <property type="entry name" value="Rudiment single hybrid motif"/>
    <property type="match status" value="1"/>
</dbReference>
<dbReference type="PROSITE" id="PS50975">
    <property type="entry name" value="ATP_GRASP"/>
    <property type="match status" value="1"/>
</dbReference>
<gene>
    <name evidence="1" type="primary">purK</name>
    <name type="ordered locus">SH1892</name>
</gene>
<protein>
    <recommendedName>
        <fullName evidence="1">N5-carboxyaminoimidazole ribonucleotide synthase</fullName>
        <shortName evidence="1">N5-CAIR synthase</shortName>
        <ecNumber evidence="1">6.3.4.18</ecNumber>
    </recommendedName>
    <alternativeName>
        <fullName evidence="1">5-(carboxyamino)imidazole ribonucleotide synthetase</fullName>
    </alternativeName>
</protein>
<accession>Q4L574</accession>
<feature type="chain" id="PRO_0000075011" description="N5-carboxyaminoimidazole ribonucleotide synthase">
    <location>
        <begin position="1"/>
        <end position="374"/>
    </location>
</feature>
<feature type="domain" description="ATP-grasp" evidence="1">
    <location>
        <begin position="112"/>
        <end position="296"/>
    </location>
</feature>
<feature type="binding site" evidence="1">
    <location>
        <position position="108"/>
    </location>
    <ligand>
        <name>ATP</name>
        <dbReference type="ChEBI" id="CHEBI:30616"/>
    </ligand>
</feature>
<feature type="binding site" evidence="1">
    <location>
        <position position="148"/>
    </location>
    <ligand>
        <name>ATP</name>
        <dbReference type="ChEBI" id="CHEBI:30616"/>
    </ligand>
</feature>
<feature type="binding site" evidence="1">
    <location>
        <begin position="153"/>
        <end position="159"/>
    </location>
    <ligand>
        <name>ATP</name>
        <dbReference type="ChEBI" id="CHEBI:30616"/>
    </ligand>
</feature>
<feature type="binding site" evidence="1">
    <location>
        <begin position="183"/>
        <end position="186"/>
    </location>
    <ligand>
        <name>ATP</name>
        <dbReference type="ChEBI" id="CHEBI:30616"/>
    </ligand>
</feature>
<feature type="binding site" evidence="1">
    <location>
        <position position="191"/>
    </location>
    <ligand>
        <name>ATP</name>
        <dbReference type="ChEBI" id="CHEBI:30616"/>
    </ligand>
</feature>
<feature type="binding site" evidence="1">
    <location>
        <position position="214"/>
    </location>
    <ligand>
        <name>ATP</name>
        <dbReference type="ChEBI" id="CHEBI:30616"/>
    </ligand>
</feature>
<feature type="binding site" evidence="1">
    <location>
        <begin position="266"/>
        <end position="267"/>
    </location>
    <ligand>
        <name>ATP</name>
        <dbReference type="ChEBI" id="CHEBI:30616"/>
    </ligand>
</feature>
<comment type="function">
    <text evidence="1">Catalyzes the ATP-dependent conversion of 5-aminoimidazole ribonucleotide (AIR) and HCO(3)(-) to N5-carboxyaminoimidazole ribonucleotide (N5-CAIR).</text>
</comment>
<comment type="catalytic activity">
    <reaction evidence="1">
        <text>5-amino-1-(5-phospho-beta-D-ribosyl)imidazole + hydrogencarbonate + ATP = 5-carboxyamino-1-(5-phospho-D-ribosyl)imidazole + ADP + phosphate + 2 H(+)</text>
        <dbReference type="Rhea" id="RHEA:19317"/>
        <dbReference type="ChEBI" id="CHEBI:15378"/>
        <dbReference type="ChEBI" id="CHEBI:17544"/>
        <dbReference type="ChEBI" id="CHEBI:30616"/>
        <dbReference type="ChEBI" id="CHEBI:43474"/>
        <dbReference type="ChEBI" id="CHEBI:58730"/>
        <dbReference type="ChEBI" id="CHEBI:137981"/>
        <dbReference type="ChEBI" id="CHEBI:456216"/>
        <dbReference type="EC" id="6.3.4.18"/>
    </reaction>
</comment>
<comment type="pathway">
    <text evidence="1">Purine metabolism; IMP biosynthesis via de novo pathway; 5-amino-1-(5-phospho-D-ribosyl)imidazole-4-carboxylate from 5-amino-1-(5-phospho-D-ribosyl)imidazole (N5-CAIR route): step 1/2.</text>
</comment>
<comment type="subunit">
    <text evidence="1">Homodimer.</text>
</comment>
<comment type="similarity">
    <text evidence="1">Belongs to the PurK/PurT family.</text>
</comment>
<comment type="sequence caution" evidence="2">
    <conflict type="erroneous initiation">
        <sequence resource="EMBL-CDS" id="BAE05201"/>
    </conflict>
</comment>